<sequence>MDLSLHVALCLGMLALCLAMPPKEKQVRWCAKSKSEFSKCRDLVNTCKNKEITLSCVEKSSTDECLTAIQNDRADAICVDGGDVYKGSLQPYNLKPIMAENYGSHTEPDTCYYAVAVVKKSSTFTFDELRDKRSCHTGIGKTAGWNVIIGLLLEKQLLKWEGPDTESLEKAVSKFFKASCVPGAKEPKLCQQCAGKKEHKCARSNNEPYYNYAGAFKCLQDDKGDVAFVKHSTVPEELHKDYELLCPDNTRKPISDYKNCNLAKVPAHSVLARARDDKSKDIIAFLQEAQKTKECKLFSSQHGKDLLFKDTAVSLVPLPPTIDGFLFLGAVYYQEIHALKEGVKEDDLAAPSKVRWCTQSKAEKTKCDDWTTISGGSIECTEAATAEDCILQILKGDADAVTLDGGYMYTAGQCGLVPVMGEYYDLDDLTPCQRRSSQAKGVYYAVAIAKKGTKVSWKNLRGVKTCHTAVGRTAGWNIPVGLITNETNNCDFASYVGESCAPGSDVKSNLCKLCIGDPAKPLDSAKKCSPSASEAYHGYSGAFRCLVEKGDVCFAKHTTVFENTDGKNPAAWAKDLKSDDYELLCPDGSRAPINDFKRCNLAEVPAHSVVTLPGKRKPVVEILVNQQSLYGRKGFQKDIFQMFQSKDGKDLLFKDSTQCLLEISEKTTMQEFLGDKYYTAVTSLNKCSNTKSGLLSSCTFHSC</sequence>
<reference key="1">
    <citation type="submission" date="2005-05" db="EMBL/GenBank/DDBJ databases">
        <authorList>
            <consortium name="NIH - Xenopus Gene Collection (XGC) project"/>
        </authorList>
    </citation>
    <scope>NUCLEOTIDE SEQUENCE [LARGE SCALE MRNA]</scope>
</reference>
<accession>Q501K5</accession>
<gene>
    <name type="primary">tf</name>
</gene>
<name>TRFE_XENTR</name>
<keyword id="KW-1015">Disulfide bond</keyword>
<keyword id="KW-0406">Ion transport</keyword>
<keyword id="KW-0408">Iron</keyword>
<keyword id="KW-0410">Iron transport</keyword>
<keyword id="KW-0479">Metal-binding</keyword>
<keyword id="KW-1185">Reference proteome</keyword>
<keyword id="KW-0677">Repeat</keyword>
<keyword id="KW-0964">Secreted</keyword>
<keyword id="KW-0732">Signal</keyword>
<keyword id="KW-0813">Transport</keyword>
<comment type="function">
    <text evidence="1">Transferrins are iron binding transport proteins which can bind two Fe(3+) ions in association with the binding of an anion, usually bicarbonate. It is responsible for the transport of iron from sites of absorption and heme degradation to those of storage and utilization. Serum transferrin may also have a further role in stimulating cell proliferation (By similarity).</text>
</comment>
<comment type="subunit">
    <text evidence="1">Monomer.</text>
</comment>
<comment type="subcellular location">
    <subcellularLocation>
        <location evidence="1">Secreted</location>
    </subcellularLocation>
</comment>
<comment type="tissue specificity">
    <text>Plasma.</text>
</comment>
<comment type="similarity">
    <text evidence="3">Belongs to the transferrin family.</text>
</comment>
<proteinExistence type="evidence at transcript level"/>
<feature type="signal peptide" evidence="2">
    <location>
        <begin position="1"/>
        <end position="19"/>
    </location>
</feature>
<feature type="chain" id="PRO_0000305242" description="Serotransferrin">
    <location>
        <begin position="20"/>
        <end position="703"/>
    </location>
</feature>
<feature type="domain" description="Transferrin-like 1" evidence="3">
    <location>
        <begin position="27"/>
        <end position="341"/>
    </location>
</feature>
<feature type="domain" description="Transferrin-like 2" evidence="3">
    <location>
        <begin position="354"/>
        <end position="686"/>
    </location>
</feature>
<feature type="region of interest" description="Connecting region" evidence="1">
    <location>
        <begin position="341"/>
        <end position="350"/>
    </location>
</feature>
<feature type="binding site" evidence="3">
    <location>
        <position position="80"/>
    </location>
    <ligand>
        <name>Fe(3+)</name>
        <dbReference type="ChEBI" id="CHEBI:29034"/>
        <label>1</label>
    </ligand>
</feature>
<feature type="binding site" evidence="3">
    <location>
        <position position="112"/>
    </location>
    <ligand>
        <name>Fe(3+)</name>
        <dbReference type="ChEBI" id="CHEBI:29034"/>
        <label>1</label>
    </ligand>
</feature>
<feature type="binding site" evidence="3">
    <location>
        <position position="137"/>
    </location>
    <ligand>
        <name>hydrogencarbonate</name>
        <dbReference type="ChEBI" id="CHEBI:17544"/>
        <label>1</label>
    </ligand>
</feature>
<feature type="binding site" evidence="3">
    <location>
        <position position="141"/>
    </location>
    <ligand>
        <name>hydrogencarbonate</name>
        <dbReference type="ChEBI" id="CHEBI:17544"/>
        <label>1</label>
    </ligand>
</feature>
<feature type="binding site" evidence="3">
    <location>
        <position position="143"/>
    </location>
    <ligand>
        <name>hydrogencarbonate</name>
        <dbReference type="ChEBI" id="CHEBI:17544"/>
        <label>1</label>
    </ligand>
</feature>
<feature type="binding site" evidence="3">
    <location>
        <position position="144"/>
    </location>
    <ligand>
        <name>hydrogencarbonate</name>
        <dbReference type="ChEBI" id="CHEBI:17544"/>
        <label>1</label>
    </ligand>
</feature>
<feature type="binding site" evidence="3">
    <location>
        <position position="212"/>
    </location>
    <ligand>
        <name>Fe(3+)</name>
        <dbReference type="ChEBI" id="CHEBI:29034"/>
        <label>1</label>
    </ligand>
</feature>
<feature type="binding site" evidence="3">
    <location>
        <position position="268"/>
    </location>
    <ligand>
        <name>Fe(3+)</name>
        <dbReference type="ChEBI" id="CHEBI:29034"/>
        <label>1</label>
    </ligand>
</feature>
<feature type="binding site" evidence="3">
    <location>
        <position position="404"/>
    </location>
    <ligand>
        <name>Fe(3+)</name>
        <dbReference type="ChEBI" id="CHEBI:29034"/>
        <label>2</label>
    </ligand>
</feature>
<feature type="binding site" evidence="3">
    <location>
        <position position="443"/>
    </location>
    <ligand>
        <name>Fe(3+)</name>
        <dbReference type="ChEBI" id="CHEBI:29034"/>
        <label>2</label>
    </ligand>
</feature>
<feature type="binding site" evidence="3">
    <location>
        <position position="468"/>
    </location>
    <ligand>
        <name>hydrogencarbonate</name>
        <dbReference type="ChEBI" id="CHEBI:17544"/>
        <label>2</label>
    </ligand>
</feature>
<feature type="binding site" evidence="3">
    <location>
        <position position="472"/>
    </location>
    <ligand>
        <name>hydrogencarbonate</name>
        <dbReference type="ChEBI" id="CHEBI:17544"/>
        <label>2</label>
    </ligand>
</feature>
<feature type="binding site" evidence="3">
    <location>
        <position position="474"/>
    </location>
    <ligand>
        <name>hydrogencarbonate</name>
        <dbReference type="ChEBI" id="CHEBI:17544"/>
        <label>2</label>
    </ligand>
</feature>
<feature type="binding site" evidence="3">
    <location>
        <position position="475"/>
    </location>
    <ligand>
        <name>hydrogencarbonate</name>
        <dbReference type="ChEBI" id="CHEBI:17544"/>
        <label>2</label>
    </ligand>
</feature>
<feature type="binding site" evidence="3">
    <location>
        <position position="539"/>
    </location>
    <ligand>
        <name>Fe(3+)</name>
        <dbReference type="ChEBI" id="CHEBI:29034"/>
        <label>2</label>
    </ligand>
</feature>
<feature type="binding site" evidence="3">
    <location>
        <position position="607"/>
    </location>
    <ligand>
        <name>Fe(3+)</name>
        <dbReference type="ChEBI" id="CHEBI:29034"/>
        <label>2</label>
    </ligand>
</feature>
<feature type="disulfide bond" evidence="3">
    <location>
        <begin position="30"/>
        <end position="65"/>
    </location>
</feature>
<feature type="disulfide bond" evidence="3">
    <location>
        <begin position="40"/>
        <end position="56"/>
    </location>
</feature>
<feature type="disulfide bond" evidence="3">
    <location>
        <begin position="135"/>
        <end position="218"/>
    </location>
</feature>
<feature type="disulfide bond" evidence="3">
    <location>
        <begin position="180"/>
        <end position="193"/>
    </location>
</feature>
<feature type="disulfide bond" evidence="3">
    <location>
        <begin position="246"/>
        <end position="260"/>
    </location>
</feature>
<feature type="disulfide bond" evidence="3">
    <location>
        <begin position="357"/>
        <end position="389"/>
    </location>
</feature>
<feature type="disulfide bond" evidence="3">
    <location>
        <begin position="367"/>
        <end position="380"/>
    </location>
</feature>
<feature type="disulfide bond" evidence="3">
    <location>
        <begin position="414"/>
        <end position="698"/>
    </location>
</feature>
<feature type="disulfide bond" evidence="3">
    <location>
        <begin position="432"/>
        <end position="659"/>
    </location>
</feature>
<feature type="disulfide bond" evidence="3">
    <location>
        <begin position="466"/>
        <end position="545"/>
    </location>
</feature>
<feature type="disulfide bond" evidence="3">
    <location>
        <begin position="490"/>
        <end position="687"/>
    </location>
</feature>
<feature type="disulfide bond" evidence="3">
    <location>
        <begin position="500"/>
        <end position="514"/>
    </location>
</feature>
<feature type="disulfide bond" evidence="3">
    <location>
        <begin position="511"/>
        <end position="528"/>
    </location>
</feature>
<feature type="disulfide bond" evidence="3">
    <location>
        <begin position="585"/>
        <end position="599"/>
    </location>
</feature>
<protein>
    <recommendedName>
        <fullName>Serotransferrin</fullName>
    </recommendedName>
</protein>
<dbReference type="EMBL" id="BC096012">
    <property type="protein sequence ID" value="AAH96012.1"/>
    <property type="molecule type" value="mRNA"/>
</dbReference>
<dbReference type="RefSeq" id="NP_001027487.1">
    <property type="nucleotide sequence ID" value="NM_001032316.1"/>
</dbReference>
<dbReference type="SMR" id="Q501K5"/>
<dbReference type="FunCoup" id="Q501K5">
    <property type="interactions" value="1290"/>
</dbReference>
<dbReference type="STRING" id="8364.ENSXETP00000015130"/>
<dbReference type="MEROPS" id="S60.970"/>
<dbReference type="GeneID" id="613079"/>
<dbReference type="KEGG" id="xtr:613079"/>
<dbReference type="AGR" id="Xenbase:XB-GENE-480506"/>
<dbReference type="CTD" id="7018"/>
<dbReference type="Xenbase" id="XB-GENE-480506">
    <property type="gene designation" value="tf"/>
</dbReference>
<dbReference type="InParanoid" id="Q501K5"/>
<dbReference type="OMA" id="DEWSINS"/>
<dbReference type="OrthoDB" id="9981115at2759"/>
<dbReference type="Reactome" id="R-XTR-114608">
    <property type="pathway name" value="Platelet degranulation"/>
</dbReference>
<dbReference type="Reactome" id="R-XTR-381426">
    <property type="pathway name" value="Regulation of Insulin-like Growth Factor (IGF) transport and uptake by Insulin-like Growth Factor Binding Proteins (IGFBPs)"/>
</dbReference>
<dbReference type="Reactome" id="R-XTR-6798695">
    <property type="pathway name" value="Neutrophil degranulation"/>
</dbReference>
<dbReference type="Reactome" id="R-XTR-6799990">
    <property type="pathway name" value="Metal sequestration by antimicrobial proteins"/>
</dbReference>
<dbReference type="Reactome" id="R-XTR-8957275">
    <property type="pathway name" value="Post-translational protein phosphorylation"/>
</dbReference>
<dbReference type="Reactome" id="R-XTR-917937">
    <property type="pathway name" value="Iron uptake and transport"/>
</dbReference>
<dbReference type="Reactome" id="R-XTR-917977">
    <property type="pathway name" value="Transferrin endocytosis and recycling"/>
</dbReference>
<dbReference type="Proteomes" id="UP000008143">
    <property type="component" value="Chromosome 5"/>
</dbReference>
<dbReference type="GO" id="GO:0005615">
    <property type="term" value="C:extracellular space"/>
    <property type="evidence" value="ECO:0007669"/>
    <property type="project" value="InterPro"/>
</dbReference>
<dbReference type="GO" id="GO:0046872">
    <property type="term" value="F:metal ion binding"/>
    <property type="evidence" value="ECO:0007669"/>
    <property type="project" value="UniProtKB-KW"/>
</dbReference>
<dbReference type="GO" id="GO:0006826">
    <property type="term" value="P:iron ion transport"/>
    <property type="evidence" value="ECO:0007669"/>
    <property type="project" value="UniProtKB-KW"/>
</dbReference>
<dbReference type="CDD" id="cd13617">
    <property type="entry name" value="PBP2_transferrin_C"/>
    <property type="match status" value="1"/>
</dbReference>
<dbReference type="CDD" id="cd13618">
    <property type="entry name" value="PBP2_transferrin_N"/>
    <property type="match status" value="1"/>
</dbReference>
<dbReference type="FunFam" id="3.40.190.10:FF:000095">
    <property type="entry name" value="Lactotransferrin"/>
    <property type="match status" value="2"/>
</dbReference>
<dbReference type="Gene3D" id="3.40.190.10">
    <property type="entry name" value="Periplasmic binding protein-like II"/>
    <property type="match status" value="4"/>
</dbReference>
<dbReference type="InterPro" id="IPR016357">
    <property type="entry name" value="Transferrin"/>
</dbReference>
<dbReference type="InterPro" id="IPR001156">
    <property type="entry name" value="Transferrin-like_dom"/>
</dbReference>
<dbReference type="InterPro" id="IPR018195">
    <property type="entry name" value="Transferrin_Fe_BS"/>
</dbReference>
<dbReference type="PANTHER" id="PTHR11485:SF31">
    <property type="entry name" value="SEROTRANSFERRIN"/>
    <property type="match status" value="1"/>
</dbReference>
<dbReference type="PANTHER" id="PTHR11485">
    <property type="entry name" value="TRANSFERRIN"/>
    <property type="match status" value="1"/>
</dbReference>
<dbReference type="Pfam" id="PF00405">
    <property type="entry name" value="Transferrin"/>
    <property type="match status" value="2"/>
</dbReference>
<dbReference type="PIRSF" id="PIRSF002549">
    <property type="entry name" value="Transferrin"/>
    <property type="match status" value="1"/>
</dbReference>
<dbReference type="PRINTS" id="PR00422">
    <property type="entry name" value="TRANSFERRIN"/>
</dbReference>
<dbReference type="SMART" id="SM00094">
    <property type="entry name" value="TR_FER"/>
    <property type="match status" value="2"/>
</dbReference>
<dbReference type="SUPFAM" id="SSF53850">
    <property type="entry name" value="Periplasmic binding protein-like II"/>
    <property type="match status" value="2"/>
</dbReference>
<dbReference type="PROSITE" id="PS00205">
    <property type="entry name" value="TRANSFERRIN_LIKE_1"/>
    <property type="match status" value="2"/>
</dbReference>
<dbReference type="PROSITE" id="PS00206">
    <property type="entry name" value="TRANSFERRIN_LIKE_2"/>
    <property type="match status" value="1"/>
</dbReference>
<dbReference type="PROSITE" id="PS00207">
    <property type="entry name" value="TRANSFERRIN_LIKE_3"/>
    <property type="match status" value="2"/>
</dbReference>
<dbReference type="PROSITE" id="PS51408">
    <property type="entry name" value="TRANSFERRIN_LIKE_4"/>
    <property type="match status" value="2"/>
</dbReference>
<evidence type="ECO:0000250" key="1"/>
<evidence type="ECO:0000255" key="2"/>
<evidence type="ECO:0000255" key="3">
    <source>
        <dbReference type="PROSITE-ProRule" id="PRU00741"/>
    </source>
</evidence>
<organism>
    <name type="scientific">Xenopus tropicalis</name>
    <name type="common">Western clawed frog</name>
    <name type="synonym">Silurana tropicalis</name>
    <dbReference type="NCBI Taxonomy" id="8364"/>
    <lineage>
        <taxon>Eukaryota</taxon>
        <taxon>Metazoa</taxon>
        <taxon>Chordata</taxon>
        <taxon>Craniata</taxon>
        <taxon>Vertebrata</taxon>
        <taxon>Euteleostomi</taxon>
        <taxon>Amphibia</taxon>
        <taxon>Batrachia</taxon>
        <taxon>Anura</taxon>
        <taxon>Pipoidea</taxon>
        <taxon>Pipidae</taxon>
        <taxon>Xenopodinae</taxon>
        <taxon>Xenopus</taxon>
        <taxon>Silurana</taxon>
    </lineage>
</organism>